<protein>
    <recommendedName>
        <fullName evidence="1">ATP synthase subunit alpha</fullName>
        <ecNumber evidence="1">7.1.2.2</ecNumber>
    </recommendedName>
    <alternativeName>
        <fullName evidence="1">ATP synthase F1 sector subunit alpha</fullName>
    </alternativeName>
    <alternativeName>
        <fullName evidence="1">F-ATPase subunit alpha</fullName>
    </alternativeName>
</protein>
<organism>
    <name type="scientific">Francisella tularensis subsp. mediasiatica (strain FSC147)</name>
    <dbReference type="NCBI Taxonomy" id="441952"/>
    <lineage>
        <taxon>Bacteria</taxon>
        <taxon>Pseudomonadati</taxon>
        <taxon>Pseudomonadota</taxon>
        <taxon>Gammaproteobacteria</taxon>
        <taxon>Thiotrichales</taxon>
        <taxon>Francisellaceae</taxon>
        <taxon>Francisella</taxon>
    </lineage>
</organism>
<reference key="1">
    <citation type="journal article" date="2009" name="PLoS Pathog.">
        <title>Molecular evolutionary consequences of niche restriction in Francisella tularensis, a facultative intracellular pathogen.</title>
        <authorList>
            <person name="Larsson P."/>
            <person name="Elfsmark D."/>
            <person name="Svensson K."/>
            <person name="Wikstroem P."/>
            <person name="Forsman M."/>
            <person name="Brettin T."/>
            <person name="Keim P."/>
            <person name="Johansson A."/>
        </authorList>
    </citation>
    <scope>NUCLEOTIDE SEQUENCE [LARGE SCALE GENOMIC DNA]</scope>
    <source>
        <strain>FSC147</strain>
    </source>
</reference>
<dbReference type="EC" id="7.1.2.2" evidence="1"/>
<dbReference type="EMBL" id="CP000915">
    <property type="protein sequence ID" value="ACD30224.1"/>
    <property type="molecule type" value="Genomic_DNA"/>
</dbReference>
<dbReference type="SMR" id="B2SEX9"/>
<dbReference type="KEGG" id="ftm:FTM_0126"/>
<dbReference type="HOGENOM" id="CLU_010091_2_1_6"/>
<dbReference type="GO" id="GO:0005886">
    <property type="term" value="C:plasma membrane"/>
    <property type="evidence" value="ECO:0007669"/>
    <property type="project" value="UniProtKB-SubCell"/>
</dbReference>
<dbReference type="GO" id="GO:0045259">
    <property type="term" value="C:proton-transporting ATP synthase complex"/>
    <property type="evidence" value="ECO:0007669"/>
    <property type="project" value="UniProtKB-KW"/>
</dbReference>
<dbReference type="GO" id="GO:0043531">
    <property type="term" value="F:ADP binding"/>
    <property type="evidence" value="ECO:0007669"/>
    <property type="project" value="TreeGrafter"/>
</dbReference>
<dbReference type="GO" id="GO:0005524">
    <property type="term" value="F:ATP binding"/>
    <property type="evidence" value="ECO:0007669"/>
    <property type="project" value="UniProtKB-UniRule"/>
</dbReference>
<dbReference type="GO" id="GO:0046933">
    <property type="term" value="F:proton-transporting ATP synthase activity, rotational mechanism"/>
    <property type="evidence" value="ECO:0007669"/>
    <property type="project" value="UniProtKB-UniRule"/>
</dbReference>
<dbReference type="CDD" id="cd18113">
    <property type="entry name" value="ATP-synt_F1_alpha_C"/>
    <property type="match status" value="1"/>
</dbReference>
<dbReference type="CDD" id="cd18116">
    <property type="entry name" value="ATP-synt_F1_alpha_N"/>
    <property type="match status" value="1"/>
</dbReference>
<dbReference type="CDD" id="cd01132">
    <property type="entry name" value="F1-ATPase_alpha_CD"/>
    <property type="match status" value="1"/>
</dbReference>
<dbReference type="FunFam" id="1.20.150.20:FF:000001">
    <property type="entry name" value="ATP synthase subunit alpha"/>
    <property type="match status" value="1"/>
</dbReference>
<dbReference type="FunFam" id="2.40.30.20:FF:000001">
    <property type="entry name" value="ATP synthase subunit alpha"/>
    <property type="match status" value="1"/>
</dbReference>
<dbReference type="FunFam" id="3.40.50.300:FF:000002">
    <property type="entry name" value="ATP synthase subunit alpha"/>
    <property type="match status" value="1"/>
</dbReference>
<dbReference type="Gene3D" id="2.40.30.20">
    <property type="match status" value="1"/>
</dbReference>
<dbReference type="Gene3D" id="1.20.150.20">
    <property type="entry name" value="ATP synthase alpha/beta chain, C-terminal domain"/>
    <property type="match status" value="1"/>
</dbReference>
<dbReference type="Gene3D" id="3.40.50.300">
    <property type="entry name" value="P-loop containing nucleotide triphosphate hydrolases"/>
    <property type="match status" value="1"/>
</dbReference>
<dbReference type="HAMAP" id="MF_01346">
    <property type="entry name" value="ATP_synth_alpha_bact"/>
    <property type="match status" value="1"/>
</dbReference>
<dbReference type="InterPro" id="IPR023366">
    <property type="entry name" value="ATP_synth_asu-like_sf"/>
</dbReference>
<dbReference type="InterPro" id="IPR000793">
    <property type="entry name" value="ATP_synth_asu_C"/>
</dbReference>
<dbReference type="InterPro" id="IPR038376">
    <property type="entry name" value="ATP_synth_asu_C_sf"/>
</dbReference>
<dbReference type="InterPro" id="IPR033732">
    <property type="entry name" value="ATP_synth_F1_a_nt-bd_dom"/>
</dbReference>
<dbReference type="InterPro" id="IPR005294">
    <property type="entry name" value="ATP_synth_F1_asu"/>
</dbReference>
<dbReference type="InterPro" id="IPR020003">
    <property type="entry name" value="ATPase_a/bsu_AS"/>
</dbReference>
<dbReference type="InterPro" id="IPR004100">
    <property type="entry name" value="ATPase_F1/V1/A1_a/bsu_N"/>
</dbReference>
<dbReference type="InterPro" id="IPR036121">
    <property type="entry name" value="ATPase_F1/V1/A1_a/bsu_N_sf"/>
</dbReference>
<dbReference type="InterPro" id="IPR000194">
    <property type="entry name" value="ATPase_F1/V1/A1_a/bsu_nucl-bd"/>
</dbReference>
<dbReference type="InterPro" id="IPR027417">
    <property type="entry name" value="P-loop_NTPase"/>
</dbReference>
<dbReference type="NCBIfam" id="TIGR00962">
    <property type="entry name" value="atpA"/>
    <property type="match status" value="1"/>
</dbReference>
<dbReference type="NCBIfam" id="NF009884">
    <property type="entry name" value="PRK13343.1"/>
    <property type="match status" value="1"/>
</dbReference>
<dbReference type="PANTHER" id="PTHR48082">
    <property type="entry name" value="ATP SYNTHASE SUBUNIT ALPHA, MITOCHONDRIAL"/>
    <property type="match status" value="1"/>
</dbReference>
<dbReference type="PANTHER" id="PTHR48082:SF2">
    <property type="entry name" value="ATP SYNTHASE SUBUNIT ALPHA, MITOCHONDRIAL"/>
    <property type="match status" value="1"/>
</dbReference>
<dbReference type="Pfam" id="PF00006">
    <property type="entry name" value="ATP-synt_ab"/>
    <property type="match status" value="1"/>
</dbReference>
<dbReference type="Pfam" id="PF00306">
    <property type="entry name" value="ATP-synt_ab_C"/>
    <property type="match status" value="1"/>
</dbReference>
<dbReference type="Pfam" id="PF02874">
    <property type="entry name" value="ATP-synt_ab_N"/>
    <property type="match status" value="1"/>
</dbReference>
<dbReference type="PIRSF" id="PIRSF039088">
    <property type="entry name" value="F_ATPase_subunit_alpha"/>
    <property type="match status" value="1"/>
</dbReference>
<dbReference type="SUPFAM" id="SSF47917">
    <property type="entry name" value="C-terminal domain of alpha and beta subunits of F1 ATP synthase"/>
    <property type="match status" value="1"/>
</dbReference>
<dbReference type="SUPFAM" id="SSF50615">
    <property type="entry name" value="N-terminal domain of alpha and beta subunits of F1 ATP synthase"/>
    <property type="match status" value="1"/>
</dbReference>
<dbReference type="SUPFAM" id="SSF52540">
    <property type="entry name" value="P-loop containing nucleoside triphosphate hydrolases"/>
    <property type="match status" value="1"/>
</dbReference>
<dbReference type="PROSITE" id="PS00152">
    <property type="entry name" value="ATPASE_ALPHA_BETA"/>
    <property type="match status" value="1"/>
</dbReference>
<name>ATPA_FRATM</name>
<feature type="chain" id="PRO_1000143385" description="ATP synthase subunit alpha">
    <location>
        <begin position="1"/>
        <end position="513"/>
    </location>
</feature>
<feature type="binding site" evidence="1">
    <location>
        <begin position="169"/>
        <end position="176"/>
    </location>
    <ligand>
        <name>ATP</name>
        <dbReference type="ChEBI" id="CHEBI:30616"/>
    </ligand>
</feature>
<feature type="site" description="Required for activity" evidence="1">
    <location>
        <position position="373"/>
    </location>
</feature>
<comment type="function">
    <text evidence="1">Produces ATP from ADP in the presence of a proton gradient across the membrane. The alpha chain is a regulatory subunit.</text>
</comment>
<comment type="catalytic activity">
    <reaction evidence="1">
        <text>ATP + H2O + 4 H(+)(in) = ADP + phosphate + 5 H(+)(out)</text>
        <dbReference type="Rhea" id="RHEA:57720"/>
        <dbReference type="ChEBI" id="CHEBI:15377"/>
        <dbReference type="ChEBI" id="CHEBI:15378"/>
        <dbReference type="ChEBI" id="CHEBI:30616"/>
        <dbReference type="ChEBI" id="CHEBI:43474"/>
        <dbReference type="ChEBI" id="CHEBI:456216"/>
        <dbReference type="EC" id="7.1.2.2"/>
    </reaction>
</comment>
<comment type="subunit">
    <text evidence="1">F-type ATPases have 2 components, CF(1) - the catalytic core - and CF(0) - the membrane proton channel. CF(1) has five subunits: alpha(3), beta(3), gamma(1), delta(1), epsilon(1). CF(0) has three main subunits: a(1), b(2) and c(9-12). The alpha and beta chains form an alternating ring which encloses part of the gamma chain. CF(1) is attached to CF(0) by a central stalk formed by the gamma and epsilon chains, while a peripheral stalk is formed by the delta and b chains.</text>
</comment>
<comment type="subcellular location">
    <subcellularLocation>
        <location evidence="1">Cell inner membrane</location>
        <topology evidence="1">Peripheral membrane protein</topology>
    </subcellularLocation>
</comment>
<comment type="similarity">
    <text evidence="1">Belongs to the ATPase alpha/beta chains family.</text>
</comment>
<proteinExistence type="inferred from homology"/>
<accession>B2SEX9</accession>
<gene>
    <name evidence="1" type="primary">atpA</name>
    <name type="ordered locus">FTM_0126</name>
</gene>
<keyword id="KW-0066">ATP synthesis</keyword>
<keyword id="KW-0067">ATP-binding</keyword>
<keyword id="KW-0997">Cell inner membrane</keyword>
<keyword id="KW-1003">Cell membrane</keyword>
<keyword id="KW-0139">CF(1)</keyword>
<keyword id="KW-0375">Hydrogen ion transport</keyword>
<keyword id="KW-0406">Ion transport</keyword>
<keyword id="KW-0472">Membrane</keyword>
<keyword id="KW-0547">Nucleotide-binding</keyword>
<keyword id="KW-1278">Translocase</keyword>
<keyword id="KW-0813">Transport</keyword>
<sequence>MQLSPSEISGLIKQRIEKFDNSVELKSEGTIVSVADGIVTIYGLNDVVAGEMIKLPGDVYGLALNLNTDSVGAVVLGDYEHIKEGDKAYCTGRILEVPVGEALLGRVVDALGNPIDGKGEVATDLTSPIEKIAPGVIWRKSVDQALQTGIKSIDSMVPIGRGQRELIIGDRQIGKTAIAVDTIINQKGTGVKCIYVAIGQKASTIANIVRQLEEHGAMEHTIIVAATASDSAALQYIAPYAGCSMGEYFRDRGQDALIVYDDLTKQAWAYRQISLLLRRPPGREAYPGDVFYLHSRLLERAARVNEEYVEKFTNGEVKGKTGSLTALPIIETQAGDISAFVPTNVISITDGQIFLETDLFNSGLRPAINPGNSVSRVGGAAQTKIIKKLGGGIRLALAQYRELEAFSQFASDLDEATRAQLNRGQRVTELLKQKQFSTLSVALMALSLYAADNGYLDNLEVSEVIPFESALHALAETKYSDVIAEINETGKYDADIADKLKIIVEDCKANQAW</sequence>
<evidence type="ECO:0000255" key="1">
    <source>
        <dbReference type="HAMAP-Rule" id="MF_01346"/>
    </source>
</evidence>